<protein>
    <recommendedName>
        <fullName evidence="1">D-aminoacyl-tRNA deacylase</fullName>
        <shortName evidence="1">DTD</shortName>
        <ecNumber evidence="1">3.1.1.96</ecNumber>
    </recommendedName>
    <alternativeName>
        <fullName evidence="1">Gly-tRNA(Ala) deacylase</fullName>
    </alternativeName>
</protein>
<feature type="chain" id="PRO_0000259270" description="D-aminoacyl-tRNA deacylase">
    <location>
        <begin position="1"/>
        <end position="145"/>
    </location>
</feature>
<feature type="short sequence motif" description="Gly-cisPro motif, important for rejection of L-amino acids" evidence="1">
    <location>
        <begin position="137"/>
        <end position="138"/>
    </location>
</feature>
<keyword id="KW-0963">Cytoplasm</keyword>
<keyword id="KW-0378">Hydrolase</keyword>
<keyword id="KW-1185">Reference proteome</keyword>
<keyword id="KW-0694">RNA-binding</keyword>
<keyword id="KW-0820">tRNA-binding</keyword>
<organism>
    <name type="scientific">Chromohalobacter salexigens (strain ATCC BAA-138 / DSM 3043 / CIP 106854 / NCIMB 13768 / 1H11)</name>
    <dbReference type="NCBI Taxonomy" id="290398"/>
    <lineage>
        <taxon>Bacteria</taxon>
        <taxon>Pseudomonadati</taxon>
        <taxon>Pseudomonadota</taxon>
        <taxon>Gammaproteobacteria</taxon>
        <taxon>Oceanospirillales</taxon>
        <taxon>Halomonadaceae</taxon>
        <taxon>Chromohalobacter</taxon>
    </lineage>
</organism>
<evidence type="ECO:0000255" key="1">
    <source>
        <dbReference type="HAMAP-Rule" id="MF_00518"/>
    </source>
</evidence>
<comment type="function">
    <text evidence="1">An aminoacyl-tRNA editing enzyme that deacylates mischarged D-aminoacyl-tRNAs. Also deacylates mischarged glycyl-tRNA(Ala), protecting cells against glycine mischarging by AlaRS. Acts via tRNA-based rather than protein-based catalysis; rejects L-amino acids rather than detecting D-amino acids in the active site. By recycling D-aminoacyl-tRNA to D-amino acids and free tRNA molecules, this enzyme counteracts the toxicity associated with the formation of D-aminoacyl-tRNA entities in vivo and helps enforce protein L-homochirality.</text>
</comment>
<comment type="catalytic activity">
    <reaction evidence="1">
        <text>glycyl-tRNA(Ala) + H2O = tRNA(Ala) + glycine + H(+)</text>
        <dbReference type="Rhea" id="RHEA:53744"/>
        <dbReference type="Rhea" id="RHEA-COMP:9657"/>
        <dbReference type="Rhea" id="RHEA-COMP:13640"/>
        <dbReference type="ChEBI" id="CHEBI:15377"/>
        <dbReference type="ChEBI" id="CHEBI:15378"/>
        <dbReference type="ChEBI" id="CHEBI:57305"/>
        <dbReference type="ChEBI" id="CHEBI:78442"/>
        <dbReference type="ChEBI" id="CHEBI:78522"/>
        <dbReference type="EC" id="3.1.1.96"/>
    </reaction>
</comment>
<comment type="catalytic activity">
    <reaction evidence="1">
        <text>a D-aminoacyl-tRNA + H2O = a tRNA + a D-alpha-amino acid + H(+)</text>
        <dbReference type="Rhea" id="RHEA:13953"/>
        <dbReference type="Rhea" id="RHEA-COMP:10123"/>
        <dbReference type="Rhea" id="RHEA-COMP:10124"/>
        <dbReference type="ChEBI" id="CHEBI:15377"/>
        <dbReference type="ChEBI" id="CHEBI:15378"/>
        <dbReference type="ChEBI" id="CHEBI:59871"/>
        <dbReference type="ChEBI" id="CHEBI:78442"/>
        <dbReference type="ChEBI" id="CHEBI:79333"/>
        <dbReference type="EC" id="3.1.1.96"/>
    </reaction>
</comment>
<comment type="subunit">
    <text evidence="1">Homodimer.</text>
</comment>
<comment type="subcellular location">
    <subcellularLocation>
        <location evidence="1">Cytoplasm</location>
    </subcellularLocation>
</comment>
<comment type="domain">
    <text evidence="1">A Gly-cisPro motif from one monomer fits into the active site of the other monomer to allow specific chiral rejection of L-amino acids.</text>
</comment>
<comment type="similarity">
    <text evidence="1">Belongs to the DTD family.</text>
</comment>
<dbReference type="EC" id="3.1.1.96" evidence="1"/>
<dbReference type="EMBL" id="CP000285">
    <property type="protein sequence ID" value="ABE60479.1"/>
    <property type="molecule type" value="Genomic_DNA"/>
</dbReference>
<dbReference type="RefSeq" id="WP_011508425.1">
    <property type="nucleotide sequence ID" value="NC_007963.1"/>
</dbReference>
<dbReference type="SMR" id="Q1QSS9"/>
<dbReference type="STRING" id="290398.Csal_3135"/>
<dbReference type="GeneID" id="95335830"/>
<dbReference type="KEGG" id="csa:Csal_3135"/>
<dbReference type="eggNOG" id="COG1490">
    <property type="taxonomic scope" value="Bacteria"/>
</dbReference>
<dbReference type="HOGENOM" id="CLU_076901_1_1_6"/>
<dbReference type="OrthoDB" id="9801395at2"/>
<dbReference type="Proteomes" id="UP000000239">
    <property type="component" value="Chromosome"/>
</dbReference>
<dbReference type="GO" id="GO:0005737">
    <property type="term" value="C:cytoplasm"/>
    <property type="evidence" value="ECO:0007669"/>
    <property type="project" value="UniProtKB-SubCell"/>
</dbReference>
<dbReference type="GO" id="GO:0051500">
    <property type="term" value="F:D-tyrosyl-tRNA(Tyr) deacylase activity"/>
    <property type="evidence" value="ECO:0007669"/>
    <property type="project" value="TreeGrafter"/>
</dbReference>
<dbReference type="GO" id="GO:0106026">
    <property type="term" value="F:Gly-tRNA(Ala) deacylase activity"/>
    <property type="evidence" value="ECO:0007669"/>
    <property type="project" value="UniProtKB-UniRule"/>
</dbReference>
<dbReference type="GO" id="GO:0043908">
    <property type="term" value="F:Ser(Gly)-tRNA(Ala) hydrolase activity"/>
    <property type="evidence" value="ECO:0007669"/>
    <property type="project" value="UniProtKB-UniRule"/>
</dbReference>
<dbReference type="GO" id="GO:0000049">
    <property type="term" value="F:tRNA binding"/>
    <property type="evidence" value="ECO:0007669"/>
    <property type="project" value="UniProtKB-UniRule"/>
</dbReference>
<dbReference type="GO" id="GO:0019478">
    <property type="term" value="P:D-amino acid catabolic process"/>
    <property type="evidence" value="ECO:0007669"/>
    <property type="project" value="UniProtKB-UniRule"/>
</dbReference>
<dbReference type="FunFam" id="3.50.80.10:FF:000001">
    <property type="entry name" value="D-aminoacyl-tRNA deacylase"/>
    <property type="match status" value="1"/>
</dbReference>
<dbReference type="Gene3D" id="3.50.80.10">
    <property type="entry name" value="D-tyrosyl-tRNA(Tyr) deacylase"/>
    <property type="match status" value="1"/>
</dbReference>
<dbReference type="HAMAP" id="MF_00518">
    <property type="entry name" value="Deacylase_Dtd"/>
    <property type="match status" value="1"/>
</dbReference>
<dbReference type="InterPro" id="IPR003732">
    <property type="entry name" value="Daa-tRNA_deacyls_DTD"/>
</dbReference>
<dbReference type="InterPro" id="IPR023509">
    <property type="entry name" value="DTD-like_sf"/>
</dbReference>
<dbReference type="NCBIfam" id="TIGR00256">
    <property type="entry name" value="D-aminoacyl-tRNA deacylase"/>
    <property type="match status" value="1"/>
</dbReference>
<dbReference type="PANTHER" id="PTHR10472:SF5">
    <property type="entry name" value="D-AMINOACYL-TRNA DEACYLASE 1"/>
    <property type="match status" value="1"/>
</dbReference>
<dbReference type="PANTHER" id="PTHR10472">
    <property type="entry name" value="D-TYROSYL-TRNA TYR DEACYLASE"/>
    <property type="match status" value="1"/>
</dbReference>
<dbReference type="Pfam" id="PF02580">
    <property type="entry name" value="Tyr_Deacylase"/>
    <property type="match status" value="1"/>
</dbReference>
<dbReference type="SUPFAM" id="SSF69500">
    <property type="entry name" value="DTD-like"/>
    <property type="match status" value="1"/>
</dbReference>
<name>DTD_CHRSD</name>
<accession>Q1QSS9</accession>
<reference key="1">
    <citation type="journal article" date="2011" name="Stand. Genomic Sci.">
        <title>Complete genome sequence of the halophilic and highly halotolerant Chromohalobacter salexigens type strain (1H11(T)).</title>
        <authorList>
            <person name="Copeland A."/>
            <person name="O'Connor K."/>
            <person name="Lucas S."/>
            <person name="Lapidus A."/>
            <person name="Berry K.W."/>
            <person name="Detter J.C."/>
            <person name="Del Rio T.G."/>
            <person name="Hammon N."/>
            <person name="Dalin E."/>
            <person name="Tice H."/>
            <person name="Pitluck S."/>
            <person name="Bruce D."/>
            <person name="Goodwin L."/>
            <person name="Han C."/>
            <person name="Tapia R."/>
            <person name="Saunders E."/>
            <person name="Schmutz J."/>
            <person name="Brettin T."/>
            <person name="Larimer F."/>
            <person name="Land M."/>
            <person name="Hauser L."/>
            <person name="Vargas C."/>
            <person name="Nieto J.J."/>
            <person name="Kyrpides N.C."/>
            <person name="Ivanova N."/>
            <person name="Goker M."/>
            <person name="Klenk H.P."/>
            <person name="Csonka L.N."/>
            <person name="Woyke T."/>
        </authorList>
    </citation>
    <scope>NUCLEOTIDE SEQUENCE [LARGE SCALE GENOMIC DNA]</scope>
    <source>
        <strain>ATCC BAA-138 / DSM 3043 / CIP 106854 / NCIMB 13768 / 1H11</strain>
    </source>
</reference>
<sequence length="145" mass="15584">MRAVIQRVRHAGVDVDARTTGAIEQGLMVLVGVAPDDTQTRADKMLHKLLGLRVFSDEAGKMNLNVQQVEGGLLLVPQFTLMANTTKGLRPGFDGAAPPAHGEALFDYLVAQARHAWPYVATGEFGADMQVSLLNDGPVTFIVET</sequence>
<proteinExistence type="inferred from homology"/>
<gene>
    <name evidence="1" type="primary">dtd</name>
    <name type="ordered locus">Csal_3135</name>
</gene>